<sequence length="135" mass="15123">MATRLLCYTVLCLLGARILNSKVIQTPRYLVKGQGQKAKMRCIPEKGHPVVFWYQQNKNNEFKFLINFQNQEVLQQIDMTEKRFSAECPSNSPCSLEIQSSEAGDSALYLCASSLFGTSDYTFGSGTRLLVIGKA</sequence>
<organism>
    <name type="scientific">Mus musculus</name>
    <name type="common">Mouse</name>
    <dbReference type="NCBI Taxonomy" id="10090"/>
    <lineage>
        <taxon>Eukaryota</taxon>
        <taxon>Metazoa</taxon>
        <taxon>Chordata</taxon>
        <taxon>Craniata</taxon>
        <taxon>Vertebrata</taxon>
        <taxon>Euteleostomi</taxon>
        <taxon>Mammalia</taxon>
        <taxon>Eutheria</taxon>
        <taxon>Euarchontoglires</taxon>
        <taxon>Glires</taxon>
        <taxon>Rodentia</taxon>
        <taxon>Myomorpha</taxon>
        <taxon>Muroidea</taxon>
        <taxon>Muridae</taxon>
        <taxon>Murinae</taxon>
        <taxon>Mus</taxon>
        <taxon>Mus</taxon>
    </lineage>
</organism>
<reference key="1">
    <citation type="journal article" date="1985" name="Cell">
        <title>Rearranged beta T cell receptor genes in a helper T cell clone specific for lysozyme: no correlation between V beta and MHC restriction.</title>
        <authorList>
            <person name="Goverman J."/>
            <person name="Minard K."/>
            <person name="Shastri N."/>
            <person name="Hunkapiller T."/>
            <person name="Hansburg D."/>
            <person name="Sercarz E."/>
            <person name="Hood L."/>
        </authorList>
    </citation>
    <scope>NUCLEOTIDE SEQUENCE [GENOMIC DNA]</scope>
</reference>
<name>TVB1_MOUSE</name>
<feature type="signal peptide">
    <location>
        <begin position="1"/>
        <end position="20"/>
    </location>
</feature>
<feature type="chain" id="PRO_0000033598" description="T-cell receptor beta chain V region 3H.25">
    <location>
        <begin position="21"/>
        <end position="135"/>
    </location>
</feature>
<feature type="region of interest" description="V segment">
    <location>
        <begin position="21"/>
        <end position="115"/>
    </location>
</feature>
<feature type="region of interest" description="D segment">
    <location>
        <begin position="116"/>
        <end position="118"/>
    </location>
</feature>
<feature type="region of interest" description="J segment">
    <location>
        <begin position="119"/>
        <end position="135"/>
    </location>
</feature>
<feature type="disulfide bond" evidence="1">
    <location>
        <begin position="42"/>
        <end position="111"/>
    </location>
</feature>
<feature type="non-terminal residue">
    <location>
        <position position="135"/>
    </location>
</feature>
<proteinExistence type="predicted"/>
<accession>P01734</accession>
<protein>
    <recommendedName>
        <fullName>T-cell receptor beta chain V region 3H.25</fullName>
    </recommendedName>
</protein>
<keyword id="KW-1064">Adaptive immunity</keyword>
<keyword id="KW-1015">Disulfide bond</keyword>
<keyword id="KW-0391">Immunity</keyword>
<keyword id="KW-0393">Immunoglobulin domain</keyword>
<keyword id="KW-0675">Receptor</keyword>
<keyword id="KW-1185">Reference proteome</keyword>
<keyword id="KW-0732">Signal</keyword>
<keyword id="KW-1279">T cell receptor</keyword>
<comment type="miscellaneous">
    <text>This T-cell clone expresses only a single V-beta chain segment although it has three rearrangements in the beta chain family.</text>
</comment>
<comment type="miscellaneous">
    <text>This rearranged V-beta chain segment, specific for chicken egg-white lysozyme and I-A(b), is the same as that expressed in a T-helper cell specific for cytochrome C and an I-E(k) MHC molecule.</text>
</comment>
<evidence type="ECO:0000255" key="1">
    <source>
        <dbReference type="PROSITE-ProRule" id="PRU00114"/>
    </source>
</evidence>
<dbReference type="EMBL" id="M12415">
    <property type="protein sequence ID" value="AAA40249.1"/>
    <property type="molecule type" value="Genomic_DNA"/>
</dbReference>
<dbReference type="PIR" id="A02003">
    <property type="entry name" value="RWMSBV"/>
</dbReference>
<dbReference type="SMR" id="P01734"/>
<dbReference type="FunCoup" id="P01734">
    <property type="interactions" value="824"/>
</dbReference>
<dbReference type="IntAct" id="P01734">
    <property type="interactions" value="1"/>
</dbReference>
<dbReference type="UCSC" id="uc009boo.1">
    <property type="organism name" value="mouse"/>
</dbReference>
<dbReference type="InParanoid" id="P01734"/>
<dbReference type="Proteomes" id="UP000000589">
    <property type="component" value="Unplaced"/>
</dbReference>
<dbReference type="RNAct" id="P01734">
    <property type="molecule type" value="protein"/>
</dbReference>
<dbReference type="GO" id="GO:0005886">
    <property type="term" value="C:plasma membrane"/>
    <property type="evidence" value="ECO:0000318"/>
    <property type="project" value="GO_Central"/>
</dbReference>
<dbReference type="GO" id="GO:0042101">
    <property type="term" value="C:T cell receptor complex"/>
    <property type="evidence" value="ECO:0007669"/>
    <property type="project" value="UniProtKB-KW"/>
</dbReference>
<dbReference type="GO" id="GO:0002250">
    <property type="term" value="P:adaptive immune response"/>
    <property type="evidence" value="ECO:0007669"/>
    <property type="project" value="UniProtKB-KW"/>
</dbReference>
<dbReference type="GO" id="GO:0007166">
    <property type="term" value="P:cell surface receptor signaling pathway"/>
    <property type="evidence" value="ECO:0000318"/>
    <property type="project" value="GO_Central"/>
</dbReference>
<dbReference type="CDD" id="cd05899">
    <property type="entry name" value="IgV_TCR_beta"/>
    <property type="match status" value="1"/>
</dbReference>
<dbReference type="FunFam" id="2.60.40.10:FF:002491">
    <property type="entry name" value="T cell receptor beta variable 12-4"/>
    <property type="match status" value="1"/>
</dbReference>
<dbReference type="Gene3D" id="2.60.40.10">
    <property type="entry name" value="Immunoglobulins"/>
    <property type="match status" value="1"/>
</dbReference>
<dbReference type="InterPro" id="IPR007110">
    <property type="entry name" value="Ig-like_dom"/>
</dbReference>
<dbReference type="InterPro" id="IPR036179">
    <property type="entry name" value="Ig-like_dom_sf"/>
</dbReference>
<dbReference type="InterPro" id="IPR013783">
    <property type="entry name" value="Ig-like_fold"/>
</dbReference>
<dbReference type="InterPro" id="IPR003599">
    <property type="entry name" value="Ig_sub"/>
</dbReference>
<dbReference type="InterPro" id="IPR013106">
    <property type="entry name" value="Ig_V-set"/>
</dbReference>
<dbReference type="InterPro" id="IPR050413">
    <property type="entry name" value="TCR_beta_variable"/>
</dbReference>
<dbReference type="PANTHER" id="PTHR23268:SF82">
    <property type="entry name" value="NON-FUNCTIONAL T CELL RECEPTOR BETA VARIABLE 23-1-RELATED"/>
    <property type="match status" value="1"/>
</dbReference>
<dbReference type="PANTHER" id="PTHR23268">
    <property type="entry name" value="T-CELL RECEPTOR BETA CHAIN"/>
    <property type="match status" value="1"/>
</dbReference>
<dbReference type="Pfam" id="PF07686">
    <property type="entry name" value="V-set"/>
    <property type="match status" value="1"/>
</dbReference>
<dbReference type="SMART" id="SM00409">
    <property type="entry name" value="IG"/>
    <property type="match status" value="1"/>
</dbReference>
<dbReference type="SUPFAM" id="SSF48726">
    <property type="entry name" value="Immunoglobulin"/>
    <property type="match status" value="1"/>
</dbReference>
<dbReference type="PROSITE" id="PS50835">
    <property type="entry name" value="IG_LIKE"/>
    <property type="match status" value="1"/>
</dbReference>